<comment type="function">
    <text evidence="1">Component of the eukaryotic translation initiation factor 3 (eIF-3) complex, which is involved in protein synthesis of a specialized repertoire of mRNAs and, together with other initiation factors, stimulates binding of mRNA and methionyl-tRNAi to the 40S ribosome. The eIF-3 complex specifically targets and initiates translation of a subset of mRNAs involved in cell proliferation.</text>
</comment>
<comment type="subunit">
    <text evidence="1">Component of the eukaryotic translation initiation factor 3 (eIF-3) complex. The eIF-3 complex interacts with pix.</text>
</comment>
<comment type="subcellular location">
    <subcellularLocation>
        <location evidence="1">Cytoplasm</location>
    </subcellularLocation>
</comment>
<comment type="similarity">
    <text evidence="1">Belongs to the eIF-3 subunit F family.</text>
</comment>
<protein>
    <recommendedName>
        <fullName evidence="1">Eukaryotic translation initiation factor 3 subunit F-1</fullName>
        <shortName evidence="1">eIF3f-1</shortName>
    </recommendedName>
    <alternativeName>
        <fullName evidence="1">Eukaryotic translation initiation factor 3 subunit 5-1</fullName>
    </alternativeName>
</protein>
<accession>Q295I4</accession>
<proteinExistence type="inferred from homology"/>
<dbReference type="EMBL" id="CM000070">
    <property type="protein sequence ID" value="EAL28728.1"/>
    <property type="molecule type" value="Genomic_DNA"/>
</dbReference>
<dbReference type="RefSeq" id="XP_001359578.1">
    <property type="nucleotide sequence ID" value="XM_001359541.4"/>
</dbReference>
<dbReference type="SMR" id="Q295I4"/>
<dbReference type="FunCoup" id="Q295I4">
    <property type="interactions" value="2291"/>
</dbReference>
<dbReference type="STRING" id="46245.Q295I4"/>
<dbReference type="EnsemblMetazoa" id="FBtr0282939">
    <property type="protein sequence ID" value="FBpp0281377"/>
    <property type="gene ID" value="FBgn0082006"/>
</dbReference>
<dbReference type="GeneID" id="4802712"/>
<dbReference type="KEGG" id="dpo:4802712"/>
<dbReference type="CTD" id="40587"/>
<dbReference type="eggNOG" id="KOG2975">
    <property type="taxonomic scope" value="Eukaryota"/>
</dbReference>
<dbReference type="HOGENOM" id="CLU_027018_0_1_1"/>
<dbReference type="InParanoid" id="Q295I4"/>
<dbReference type="OMA" id="EYFVHFH"/>
<dbReference type="PhylomeDB" id="Q295I4"/>
<dbReference type="Proteomes" id="UP000001819">
    <property type="component" value="Chromosome 2"/>
</dbReference>
<dbReference type="Bgee" id="FBgn0082006">
    <property type="expression patterns" value="Expressed in female reproductive system and 3 other cell types or tissues"/>
</dbReference>
<dbReference type="GO" id="GO:0016282">
    <property type="term" value="C:eukaryotic 43S preinitiation complex"/>
    <property type="evidence" value="ECO:0007669"/>
    <property type="project" value="UniProtKB-UniRule"/>
</dbReference>
<dbReference type="GO" id="GO:0033290">
    <property type="term" value="C:eukaryotic 48S preinitiation complex"/>
    <property type="evidence" value="ECO:0007669"/>
    <property type="project" value="UniProtKB-UniRule"/>
</dbReference>
<dbReference type="GO" id="GO:0071541">
    <property type="term" value="C:eukaryotic translation initiation factor 3 complex, eIF3m"/>
    <property type="evidence" value="ECO:0007669"/>
    <property type="project" value="TreeGrafter"/>
</dbReference>
<dbReference type="GO" id="GO:0008237">
    <property type="term" value="F:metallopeptidase activity"/>
    <property type="evidence" value="ECO:0007669"/>
    <property type="project" value="InterPro"/>
</dbReference>
<dbReference type="GO" id="GO:0003743">
    <property type="term" value="F:translation initiation factor activity"/>
    <property type="evidence" value="ECO:0007669"/>
    <property type="project" value="UniProtKB-UniRule"/>
</dbReference>
<dbReference type="GO" id="GO:0031369">
    <property type="term" value="F:translation initiation factor binding"/>
    <property type="evidence" value="ECO:0007669"/>
    <property type="project" value="InterPro"/>
</dbReference>
<dbReference type="GO" id="GO:0001732">
    <property type="term" value="P:formation of cytoplasmic translation initiation complex"/>
    <property type="evidence" value="ECO:0007669"/>
    <property type="project" value="UniProtKB-UniRule"/>
</dbReference>
<dbReference type="CDD" id="cd08064">
    <property type="entry name" value="MPN_eIF3f"/>
    <property type="match status" value="1"/>
</dbReference>
<dbReference type="FunFam" id="3.40.140.10:FF:000014">
    <property type="entry name" value="Eukaryotic translation initiation factor 3 subunit F"/>
    <property type="match status" value="1"/>
</dbReference>
<dbReference type="Gene3D" id="3.40.140.10">
    <property type="entry name" value="Cytidine Deaminase, domain 2"/>
    <property type="match status" value="1"/>
</dbReference>
<dbReference type="HAMAP" id="MF_03005">
    <property type="entry name" value="eIF3f"/>
    <property type="match status" value="1"/>
</dbReference>
<dbReference type="InterPro" id="IPR027531">
    <property type="entry name" value="eIF3f"/>
</dbReference>
<dbReference type="InterPro" id="IPR024969">
    <property type="entry name" value="EIF3F/CSN6-like_C"/>
</dbReference>
<dbReference type="InterPro" id="IPR000555">
    <property type="entry name" value="JAMM/MPN+_dom"/>
</dbReference>
<dbReference type="InterPro" id="IPR037518">
    <property type="entry name" value="MPN"/>
</dbReference>
<dbReference type="PANTHER" id="PTHR10540:SF6">
    <property type="entry name" value="EUKARYOTIC TRANSLATION INITIATION FACTOR 3 SUBUNIT F"/>
    <property type="match status" value="1"/>
</dbReference>
<dbReference type="PANTHER" id="PTHR10540">
    <property type="entry name" value="EUKARYOTIC TRANSLATION INITIATION FACTOR 3 SUBUNIT F-RELATED"/>
    <property type="match status" value="1"/>
</dbReference>
<dbReference type="Pfam" id="PF01398">
    <property type="entry name" value="JAB"/>
    <property type="match status" value="1"/>
</dbReference>
<dbReference type="Pfam" id="PF13012">
    <property type="entry name" value="MitMem_reg"/>
    <property type="match status" value="1"/>
</dbReference>
<dbReference type="SMART" id="SM00232">
    <property type="entry name" value="JAB_MPN"/>
    <property type="match status" value="1"/>
</dbReference>
<dbReference type="PROSITE" id="PS50249">
    <property type="entry name" value="MPN"/>
    <property type="match status" value="1"/>
</dbReference>
<gene>
    <name evidence="1" type="primary">eIF3f1</name>
    <name evidence="1" type="synonym">eIF3-S5-1</name>
    <name type="ORF">GA22021</name>
</gene>
<evidence type="ECO:0000255" key="1">
    <source>
        <dbReference type="HAMAP-Rule" id="MF_03005"/>
    </source>
</evidence>
<evidence type="ECO:0000255" key="2">
    <source>
        <dbReference type="PROSITE-ProRule" id="PRU01182"/>
    </source>
</evidence>
<reference key="1">
    <citation type="journal article" date="2005" name="Genome Res.">
        <title>Comparative genome sequencing of Drosophila pseudoobscura: chromosomal, gene, and cis-element evolution.</title>
        <authorList>
            <person name="Richards S."/>
            <person name="Liu Y."/>
            <person name="Bettencourt B.R."/>
            <person name="Hradecky P."/>
            <person name="Letovsky S."/>
            <person name="Nielsen R."/>
            <person name="Thornton K."/>
            <person name="Hubisz M.J."/>
            <person name="Chen R."/>
            <person name="Meisel R.P."/>
            <person name="Couronne O."/>
            <person name="Hua S."/>
            <person name="Smith M.A."/>
            <person name="Zhang P."/>
            <person name="Liu J."/>
            <person name="Bussemaker H.J."/>
            <person name="van Batenburg M.F."/>
            <person name="Howells S.L."/>
            <person name="Scherer S.E."/>
            <person name="Sodergren E."/>
            <person name="Matthews B.B."/>
            <person name="Crosby M.A."/>
            <person name="Schroeder A.J."/>
            <person name="Ortiz-Barrientos D."/>
            <person name="Rives C.M."/>
            <person name="Metzker M.L."/>
            <person name="Muzny D.M."/>
            <person name="Scott G."/>
            <person name="Steffen D."/>
            <person name="Wheeler D.A."/>
            <person name="Worley K.C."/>
            <person name="Havlak P."/>
            <person name="Durbin K.J."/>
            <person name="Egan A."/>
            <person name="Gill R."/>
            <person name="Hume J."/>
            <person name="Morgan M.B."/>
            <person name="Miner G."/>
            <person name="Hamilton C."/>
            <person name="Huang Y."/>
            <person name="Waldron L."/>
            <person name="Verduzco D."/>
            <person name="Clerc-Blankenburg K.P."/>
            <person name="Dubchak I."/>
            <person name="Noor M.A.F."/>
            <person name="Anderson W."/>
            <person name="White K.P."/>
            <person name="Clark A.G."/>
            <person name="Schaeffer S.W."/>
            <person name="Gelbart W.M."/>
            <person name="Weinstock G.M."/>
            <person name="Gibbs R.A."/>
        </authorList>
    </citation>
    <scope>NUCLEOTIDE SEQUENCE [LARGE SCALE GENOMIC DNA]</scope>
    <source>
        <strain>MV2-25 / Tucson 14011-0121.94</strain>
    </source>
</reference>
<sequence>MSALNLTVRVHPVVLFQVVDAFERRNAESHRVIGTLLGSVEKGVVEVTNCFCVPHKEHDDQVEAELSYALDMYDLNRKVNSNEAVVGWWATGNDVTNHSSVIHEYYARECNNPVHLTVDTSLQGGRMGLRSYVCIQLGVPGGKTGCMFTPIPVELTSYEPETFGLKLLQKTVGVAPANRPKTVPPMLDLAQISEASTKLQSLLDLILKYVDDVIAHKVTPDNAVGRQLLDLIHSVPHMSHEQFTQMFNANVRNLLMVITLSQLIKTQLQLNEKLTFLPTA</sequence>
<organism>
    <name type="scientific">Drosophila pseudoobscura pseudoobscura</name>
    <name type="common">Fruit fly</name>
    <dbReference type="NCBI Taxonomy" id="46245"/>
    <lineage>
        <taxon>Eukaryota</taxon>
        <taxon>Metazoa</taxon>
        <taxon>Ecdysozoa</taxon>
        <taxon>Arthropoda</taxon>
        <taxon>Hexapoda</taxon>
        <taxon>Insecta</taxon>
        <taxon>Pterygota</taxon>
        <taxon>Neoptera</taxon>
        <taxon>Endopterygota</taxon>
        <taxon>Diptera</taxon>
        <taxon>Brachycera</taxon>
        <taxon>Muscomorpha</taxon>
        <taxon>Ephydroidea</taxon>
        <taxon>Drosophilidae</taxon>
        <taxon>Drosophila</taxon>
        <taxon>Sophophora</taxon>
    </lineage>
</organism>
<feature type="chain" id="PRO_0000364309" description="Eukaryotic translation initiation factor 3 subunit F-1">
    <location>
        <begin position="1"/>
        <end position="280"/>
    </location>
</feature>
<feature type="domain" description="MPN" evidence="2">
    <location>
        <begin position="8"/>
        <end position="138"/>
    </location>
</feature>
<name>EI3F1_DROPS</name>
<keyword id="KW-0963">Cytoplasm</keyword>
<keyword id="KW-0396">Initiation factor</keyword>
<keyword id="KW-0648">Protein biosynthesis</keyword>
<keyword id="KW-1185">Reference proteome</keyword>